<dbReference type="EMBL" id="AE017244">
    <property type="protein sequence ID" value="AAZ53416.2"/>
    <property type="molecule type" value="Genomic_DNA"/>
</dbReference>
<dbReference type="RefSeq" id="WP_011205880.1">
    <property type="nucleotide sequence ID" value="NC_007332.1"/>
</dbReference>
<dbReference type="SMR" id="Q4A8X3"/>
<dbReference type="KEGG" id="mhp:MHP7448_0039"/>
<dbReference type="HOGENOM" id="CLU_040469_1_2_14"/>
<dbReference type="Proteomes" id="UP000000553">
    <property type="component" value="Chromosome"/>
</dbReference>
<dbReference type="GO" id="GO:0005829">
    <property type="term" value="C:cytosol"/>
    <property type="evidence" value="ECO:0007669"/>
    <property type="project" value="TreeGrafter"/>
</dbReference>
<dbReference type="GO" id="GO:0005524">
    <property type="term" value="F:ATP binding"/>
    <property type="evidence" value="ECO:0007669"/>
    <property type="project" value="UniProtKB-UniRule"/>
</dbReference>
<dbReference type="GO" id="GO:0016887">
    <property type="term" value="F:ATP hydrolysis activity"/>
    <property type="evidence" value="ECO:0007669"/>
    <property type="project" value="InterPro"/>
</dbReference>
<dbReference type="GO" id="GO:0140664">
    <property type="term" value="F:ATP-dependent DNA damage sensor activity"/>
    <property type="evidence" value="ECO:0007669"/>
    <property type="project" value="InterPro"/>
</dbReference>
<dbReference type="GO" id="GO:0003684">
    <property type="term" value="F:damaged DNA binding"/>
    <property type="evidence" value="ECO:0007669"/>
    <property type="project" value="UniProtKB-UniRule"/>
</dbReference>
<dbReference type="GO" id="GO:0003697">
    <property type="term" value="F:single-stranded DNA binding"/>
    <property type="evidence" value="ECO:0007669"/>
    <property type="project" value="UniProtKB-UniRule"/>
</dbReference>
<dbReference type="GO" id="GO:0006310">
    <property type="term" value="P:DNA recombination"/>
    <property type="evidence" value="ECO:0007669"/>
    <property type="project" value="UniProtKB-UniRule"/>
</dbReference>
<dbReference type="GO" id="GO:0006281">
    <property type="term" value="P:DNA repair"/>
    <property type="evidence" value="ECO:0007669"/>
    <property type="project" value="UniProtKB-UniRule"/>
</dbReference>
<dbReference type="GO" id="GO:0009432">
    <property type="term" value="P:SOS response"/>
    <property type="evidence" value="ECO:0007669"/>
    <property type="project" value="UniProtKB-UniRule"/>
</dbReference>
<dbReference type="CDD" id="cd00983">
    <property type="entry name" value="RecA"/>
    <property type="match status" value="1"/>
</dbReference>
<dbReference type="FunFam" id="3.40.50.300:FF:000087">
    <property type="entry name" value="Recombinase RecA"/>
    <property type="match status" value="1"/>
</dbReference>
<dbReference type="Gene3D" id="3.40.50.300">
    <property type="entry name" value="P-loop containing nucleotide triphosphate hydrolases"/>
    <property type="match status" value="1"/>
</dbReference>
<dbReference type="HAMAP" id="MF_00268">
    <property type="entry name" value="RecA"/>
    <property type="match status" value="1"/>
</dbReference>
<dbReference type="InterPro" id="IPR003593">
    <property type="entry name" value="AAA+_ATPase"/>
</dbReference>
<dbReference type="InterPro" id="IPR013765">
    <property type="entry name" value="DNA_recomb/repair_RecA"/>
</dbReference>
<dbReference type="InterPro" id="IPR027417">
    <property type="entry name" value="P-loop_NTPase"/>
</dbReference>
<dbReference type="InterPro" id="IPR049261">
    <property type="entry name" value="RecA-like_C"/>
</dbReference>
<dbReference type="InterPro" id="IPR049428">
    <property type="entry name" value="RecA-like_N"/>
</dbReference>
<dbReference type="InterPro" id="IPR020588">
    <property type="entry name" value="RecA_ATP-bd"/>
</dbReference>
<dbReference type="InterPro" id="IPR023400">
    <property type="entry name" value="RecA_C_sf"/>
</dbReference>
<dbReference type="InterPro" id="IPR020587">
    <property type="entry name" value="RecA_monomer-monomer_interface"/>
</dbReference>
<dbReference type="NCBIfam" id="TIGR02012">
    <property type="entry name" value="tigrfam_recA"/>
    <property type="match status" value="1"/>
</dbReference>
<dbReference type="PANTHER" id="PTHR45900:SF1">
    <property type="entry name" value="MITOCHONDRIAL DNA REPAIR PROTEIN RECA HOMOLOG-RELATED"/>
    <property type="match status" value="1"/>
</dbReference>
<dbReference type="PANTHER" id="PTHR45900">
    <property type="entry name" value="RECA"/>
    <property type="match status" value="1"/>
</dbReference>
<dbReference type="Pfam" id="PF00154">
    <property type="entry name" value="RecA"/>
    <property type="match status" value="1"/>
</dbReference>
<dbReference type="Pfam" id="PF21096">
    <property type="entry name" value="RecA_C"/>
    <property type="match status" value="1"/>
</dbReference>
<dbReference type="PRINTS" id="PR00142">
    <property type="entry name" value="RECA"/>
</dbReference>
<dbReference type="SMART" id="SM00382">
    <property type="entry name" value="AAA"/>
    <property type="match status" value="1"/>
</dbReference>
<dbReference type="SUPFAM" id="SSF52540">
    <property type="entry name" value="P-loop containing nucleoside triphosphate hydrolases"/>
    <property type="match status" value="1"/>
</dbReference>
<dbReference type="SUPFAM" id="SSF54752">
    <property type="entry name" value="RecA protein, C-terminal domain"/>
    <property type="match status" value="1"/>
</dbReference>
<dbReference type="PROSITE" id="PS50162">
    <property type="entry name" value="RECA_2"/>
    <property type="match status" value="1"/>
</dbReference>
<dbReference type="PROSITE" id="PS50163">
    <property type="entry name" value="RECA_3"/>
    <property type="match status" value="1"/>
</dbReference>
<proteinExistence type="inferred from homology"/>
<organism>
    <name type="scientific">Mesomycoplasma hyopneumoniae (strain 7448)</name>
    <name type="common">Mycoplasma hyopneumoniae</name>
    <dbReference type="NCBI Taxonomy" id="262722"/>
    <lineage>
        <taxon>Bacteria</taxon>
        <taxon>Bacillati</taxon>
        <taxon>Mycoplasmatota</taxon>
        <taxon>Mycoplasmoidales</taxon>
        <taxon>Metamycoplasmataceae</taxon>
        <taxon>Mesomycoplasma</taxon>
    </lineage>
</organism>
<name>RECA_MESH7</name>
<comment type="function">
    <text evidence="1">Can catalyze the hydrolysis of ATP in the presence of single-stranded DNA, the ATP-dependent uptake of single-stranded DNA by duplex DNA, and the ATP-dependent hybridization of homologous single-stranded DNAs. It interacts with LexA causing its activation and leading to its autocatalytic cleavage.</text>
</comment>
<comment type="subcellular location">
    <subcellularLocation>
        <location evidence="1">Cytoplasm</location>
    </subcellularLocation>
</comment>
<comment type="similarity">
    <text evidence="1">Belongs to the RecA family.</text>
</comment>
<keyword id="KW-0067">ATP-binding</keyword>
<keyword id="KW-0963">Cytoplasm</keyword>
<keyword id="KW-0227">DNA damage</keyword>
<keyword id="KW-0233">DNA recombination</keyword>
<keyword id="KW-0234">DNA repair</keyword>
<keyword id="KW-0238">DNA-binding</keyword>
<keyword id="KW-0547">Nucleotide-binding</keyword>
<keyword id="KW-0742">SOS response</keyword>
<feature type="chain" id="PRO_1000047946" description="Protein RecA">
    <location>
        <begin position="1"/>
        <end position="337"/>
    </location>
</feature>
<feature type="binding site" evidence="1">
    <location>
        <begin position="66"/>
        <end position="73"/>
    </location>
    <ligand>
        <name>ATP</name>
        <dbReference type="ChEBI" id="CHEBI:30616"/>
    </ligand>
</feature>
<sequence>MTEINEKSLLKQALAEIKKKFGNESIMVLGEKPPIDTEVFSSGSMAIDMALGIGGFPKGRIIEIYGPESSGKTTISLHAIAEVQKQGGIAAFIDAEHSIDPQYAKNLGIDIDNLILSQPDSGEQALDIVDTLTKTKAIDLIVVDSVAALVPMAELQGEMKDQVIGAQARLMSKALRKITASLNKNGTTVIFINQIREKVGVIFGNPETTPGGRGLKFYASIRLDVRKIQQITSGNDITGHSVKIKVVKNKLAIPFKTALVEIVFAKGISKSAEIAQLGEELGILVRKGSWFAYKGENIAQGKVNLKLLLENNTKLFNEIKDQIIEKLKENQQQSQTL</sequence>
<reference key="1">
    <citation type="journal article" date="2005" name="J. Bacteriol.">
        <title>Swine and poultry pathogens: the complete genome sequences of two strains of Mycoplasma hyopneumoniae and a strain of Mycoplasma synoviae.</title>
        <authorList>
            <person name="Vasconcelos A.T.R."/>
            <person name="Ferreira H.B."/>
            <person name="Bizarro C.V."/>
            <person name="Bonatto S.L."/>
            <person name="Carvalho M.O."/>
            <person name="Pinto P.M."/>
            <person name="Almeida D.F."/>
            <person name="Almeida L.G.P."/>
            <person name="Almeida R."/>
            <person name="Alves-Junior L."/>
            <person name="Assuncao E.N."/>
            <person name="Azevedo V.A.C."/>
            <person name="Bogo M.R."/>
            <person name="Brigido M.M."/>
            <person name="Brocchi M."/>
            <person name="Burity H.A."/>
            <person name="Camargo A.A."/>
            <person name="Camargo S.S."/>
            <person name="Carepo M.S."/>
            <person name="Carraro D.M."/>
            <person name="de Mattos Cascardo J.C."/>
            <person name="Castro L.A."/>
            <person name="Cavalcanti G."/>
            <person name="Chemale G."/>
            <person name="Collevatti R.G."/>
            <person name="Cunha C.W."/>
            <person name="Dallagiovanna B."/>
            <person name="Dambros B.P."/>
            <person name="Dellagostin O.A."/>
            <person name="Falcao C."/>
            <person name="Fantinatti-Garboggini F."/>
            <person name="Felipe M.S.S."/>
            <person name="Fiorentin L."/>
            <person name="Franco G.R."/>
            <person name="Freitas N.S.A."/>
            <person name="Frias D."/>
            <person name="Grangeiro T.B."/>
            <person name="Grisard E.C."/>
            <person name="Guimaraes C.T."/>
            <person name="Hungria M."/>
            <person name="Jardim S.N."/>
            <person name="Krieger M.A."/>
            <person name="Laurino J.P."/>
            <person name="Lima L.F.A."/>
            <person name="Lopes M.I."/>
            <person name="Loreto E.L.S."/>
            <person name="Madeira H.M.F."/>
            <person name="Manfio G.P."/>
            <person name="Maranhao A.Q."/>
            <person name="Martinkovics C.T."/>
            <person name="Medeiros S.R.B."/>
            <person name="Moreira M.A.M."/>
            <person name="Neiva M."/>
            <person name="Ramalho-Neto C.E."/>
            <person name="Nicolas M.F."/>
            <person name="Oliveira S.C."/>
            <person name="Paixao R.F.C."/>
            <person name="Pedrosa F.O."/>
            <person name="Pena S.D.J."/>
            <person name="Pereira M."/>
            <person name="Pereira-Ferrari L."/>
            <person name="Piffer I."/>
            <person name="Pinto L.S."/>
            <person name="Potrich D.P."/>
            <person name="Salim A.C.M."/>
            <person name="Santos F.R."/>
            <person name="Schmitt R."/>
            <person name="Schneider M.P.C."/>
            <person name="Schrank A."/>
            <person name="Schrank I.S."/>
            <person name="Schuck A.F."/>
            <person name="Seuanez H.N."/>
            <person name="Silva D.W."/>
            <person name="Silva R."/>
            <person name="Silva S.C."/>
            <person name="Soares C.M.A."/>
            <person name="Souza K.R.L."/>
            <person name="Souza R.C."/>
            <person name="Staats C.C."/>
            <person name="Steffens M.B.R."/>
            <person name="Teixeira S.M.R."/>
            <person name="Urmenyi T.P."/>
            <person name="Vainstein M.H."/>
            <person name="Zuccherato L.W."/>
            <person name="Simpson A.J.G."/>
            <person name="Zaha A."/>
        </authorList>
    </citation>
    <scope>NUCLEOTIDE SEQUENCE [LARGE SCALE GENOMIC DNA]</scope>
    <source>
        <strain>7448</strain>
    </source>
</reference>
<evidence type="ECO:0000255" key="1">
    <source>
        <dbReference type="HAMAP-Rule" id="MF_00268"/>
    </source>
</evidence>
<gene>
    <name evidence="1" type="primary">recA</name>
    <name type="ordered locus">MHP7448_0039</name>
</gene>
<accession>Q4A8X3</accession>
<protein>
    <recommendedName>
        <fullName evidence="1">Protein RecA</fullName>
    </recommendedName>
    <alternativeName>
        <fullName evidence="1">Recombinase A</fullName>
    </alternativeName>
</protein>